<dbReference type="EMBL" id="AL583925">
    <property type="protein sequence ID" value="CAC31971.1"/>
    <property type="molecule type" value="Genomic_DNA"/>
</dbReference>
<dbReference type="PIR" id="C87216">
    <property type="entry name" value="C87216"/>
</dbReference>
<dbReference type="RefSeq" id="NP_302592.1">
    <property type="nucleotide sequence ID" value="NC_002677.1"/>
</dbReference>
<dbReference type="RefSeq" id="WP_010908911.1">
    <property type="nucleotide sequence ID" value="NC_002677.1"/>
</dbReference>
<dbReference type="SMR" id="Q9CB42"/>
<dbReference type="STRING" id="272631.gene:17576317"/>
<dbReference type="KEGG" id="mle:ML2454"/>
<dbReference type="PATRIC" id="fig|272631.5.peg.4708"/>
<dbReference type="Leproma" id="ML2454"/>
<dbReference type="eggNOG" id="ENOG50335M1">
    <property type="taxonomic scope" value="Bacteria"/>
</dbReference>
<dbReference type="HOGENOM" id="CLU_089817_1_0_11"/>
<dbReference type="OrthoDB" id="4377076at2"/>
<dbReference type="Proteomes" id="UP000000806">
    <property type="component" value="Chromosome"/>
</dbReference>
<dbReference type="Gene3D" id="1.20.5.1230">
    <property type="entry name" value="Apolipoprotein A-I"/>
    <property type="match status" value="1"/>
</dbReference>
<organism>
    <name type="scientific">Mycobacterium leprae (strain TN)</name>
    <dbReference type="NCBI Taxonomy" id="272631"/>
    <lineage>
        <taxon>Bacteria</taxon>
        <taxon>Bacillati</taxon>
        <taxon>Actinomycetota</taxon>
        <taxon>Actinomycetes</taxon>
        <taxon>Mycobacteriales</taxon>
        <taxon>Mycobacteriaceae</taxon>
        <taxon>Mycobacterium</taxon>
    </lineage>
</organism>
<gene>
    <name type="primary">hbhA</name>
    <name type="ordered locus">ML2454</name>
</gene>
<proteinExistence type="predicted"/>
<keyword id="KW-1185">Reference proteome</keyword>
<feature type="chain" id="PRO_0000083909" description="Heparin-binding hemagglutinin homolog">
    <location>
        <begin position="1"/>
        <end position="188"/>
    </location>
</feature>
<feature type="region of interest" description="Disordered" evidence="1">
    <location>
        <begin position="162"/>
        <end position="188"/>
    </location>
</feature>
<feature type="compositionally biased region" description="Basic residues" evidence="1">
    <location>
        <begin position="170"/>
        <end position="188"/>
    </location>
</feature>
<reference key="1">
    <citation type="journal article" date="2001" name="Nature">
        <title>Massive gene decay in the leprosy bacillus.</title>
        <authorList>
            <person name="Cole S.T."/>
            <person name="Eiglmeier K."/>
            <person name="Parkhill J."/>
            <person name="James K.D."/>
            <person name="Thomson N.R."/>
            <person name="Wheeler P.R."/>
            <person name="Honore N."/>
            <person name="Garnier T."/>
            <person name="Churcher C.M."/>
            <person name="Harris D.E."/>
            <person name="Mungall K.L."/>
            <person name="Basham D."/>
            <person name="Brown D."/>
            <person name="Chillingworth T."/>
            <person name="Connor R."/>
            <person name="Davies R.M."/>
            <person name="Devlin K."/>
            <person name="Duthoy S."/>
            <person name="Feltwell T."/>
            <person name="Fraser A."/>
            <person name="Hamlin N."/>
            <person name="Holroyd S."/>
            <person name="Hornsby T."/>
            <person name="Jagels K."/>
            <person name="Lacroix C."/>
            <person name="Maclean J."/>
            <person name="Moule S."/>
            <person name="Murphy L.D."/>
            <person name="Oliver K."/>
            <person name="Quail M.A."/>
            <person name="Rajandream M.A."/>
            <person name="Rutherford K.M."/>
            <person name="Rutter S."/>
            <person name="Seeger K."/>
            <person name="Simon S."/>
            <person name="Simmonds M."/>
            <person name="Skelton J."/>
            <person name="Squares R."/>
            <person name="Squares S."/>
            <person name="Stevens K."/>
            <person name="Taylor K."/>
            <person name="Whitehead S."/>
            <person name="Woodward J.R."/>
            <person name="Barrell B.G."/>
        </authorList>
    </citation>
    <scope>NUCLEOTIDE SEQUENCE [LARGE SCALE GENOMIC DNA]</scope>
    <source>
        <strain>TN</strain>
    </source>
</reference>
<protein>
    <recommendedName>
        <fullName>Heparin-binding hemagglutinin homolog</fullName>
    </recommendedName>
    <alternativeName>
        <fullName>Adhesin</fullName>
    </alternativeName>
</protein>
<comment type="function">
    <text>Might mediate adherence to host cells by binding sulfated glycoconjugates.</text>
</comment>
<comment type="similarity">
    <text evidence="2">To M.tuberculosis HbhA.</text>
</comment>
<accession>Q9CB42</accession>
<sequence length="188" mass="20421">MAENPNVDDLRAPLLAALGAADLALTTVNELVGNMRERAEETRIDTRSRVEESRARVAKLQEVLPEHLSELREKFTADELRKAAEGYLEAATNRYNELVERGEAALERLRSRPVFEDASARAEGYVDQAVELTQEALGTVASQTRAVGGRAAKLVGIELPKKAAAPARKAPAKKAPAKKAPAKKVTQK</sequence>
<name>HBHA_MYCLE</name>
<evidence type="ECO:0000256" key="1">
    <source>
        <dbReference type="SAM" id="MobiDB-lite"/>
    </source>
</evidence>
<evidence type="ECO:0000305" key="2"/>